<name>CC148_HUMAN</name>
<accession>Q8NFR7</accession>
<accession>F5H839</accession>
<accession>Q3B7I3</accession>
<accession>Q3B7I4</accession>
<accession>Q3KR41</accession>
<accession>Q4ZG12</accession>
<accession>Q4ZG23</accession>
<accession>Q53TM6</accession>
<accession>Q96BN5</accession>
<accession>Q96LM2</accession>
<sequence length="591" mass="71076">MCAASASPDNLVFHMKNEMRNIKYKPVDYQQLRALTEAKKLASASAKLKIRKAMLTSKLSKEQTLIKQHKQVWWQEYQRLNEVRCKMESEIKSLLNEENIGNECLCDLTNFEQELSEQQCTYLKNVINPIQQLRADLKYRQHHTLQHSHPHIEFNSMKVLEEVDFVKKQLKTVFERLRLEQQRIENDLSDWSIKILDHSLEEKTNPLSELPIELESLECPYPDLKSSILSEFYKFTQKYQKKLQDFNLQLEDIYRNCQLSEEDHWIYQAILDQYPGDLFGRRTLYLDMLQRYFPHKSRHDLVEHEKYCDQYRFAIEQQNILISNWNKNKKDFIQKAVLTLTEACATHEMESMLAKDKKKQQELCADLKAKVRQWRAHQEEVARLEMEISARRREKEEEKEKLWKKKELLQRAEKKKKIKKYWAKKKQKWQEMEMRDLQRLEELKKLIAEQSLKDRERVKYRQELLERRLMEKKEVALQEAHEDKERARRLEALRKQVAVVAQFDPVRMMSDTMASKARMGIEIEEEFILQKPLFTLNTYNEQQIISDPRLRFELALREAGLHRTLYAKEILPKISPQKPPRKDMESTVFKI</sequence>
<feature type="chain" id="PRO_0000326063" description="Coiled-coil domain-containing protein 148">
    <location>
        <begin position="1"/>
        <end position="591"/>
    </location>
</feature>
<feature type="coiled-coil region" evidence="1">
    <location>
        <begin position="166"/>
        <end position="195"/>
    </location>
</feature>
<feature type="coiled-coil region" evidence="1">
    <location>
        <begin position="352"/>
        <end position="417"/>
    </location>
</feature>
<feature type="coiled-coil region" evidence="1">
    <location>
        <begin position="466"/>
        <end position="498"/>
    </location>
</feature>
<feature type="splice variant" id="VSP_032532" description="In isoform 2." evidence="7">
    <location>
        <begin position="1"/>
        <end position="152"/>
    </location>
</feature>
<feature type="splice variant" id="VSP_045395" description="In isoform 4." evidence="6">
    <location>
        <begin position="1"/>
        <end position="86"/>
    </location>
</feature>
<feature type="splice variant" id="VSP_032533" description="In isoform 2." evidence="7">
    <original>EFNSMKVLEE</original>
    <variation>MNVFVTLQIL</variation>
    <location>
        <begin position="153"/>
        <end position="162"/>
    </location>
</feature>
<feature type="splice variant" id="VSP_032536" description="In isoform 3." evidence="6 7">
    <location>
        <begin position="256"/>
        <end position="591"/>
    </location>
</feature>
<feature type="splice variant" id="VSP_045396" description="In isoform 4." evidence="6">
    <original>VRQWRAHQEEVARLE</original>
    <variation>SQVCLYQQHENGLIQ</variation>
    <location>
        <begin position="371"/>
        <end position="385"/>
    </location>
</feature>
<feature type="splice variant" id="VSP_045397" description="In isoform 4." evidence="6">
    <location>
        <begin position="386"/>
        <end position="591"/>
    </location>
</feature>
<feature type="splice variant" id="VSP_032534" description="In isoform 2." evidence="7">
    <original>KIKKYWAKKK</original>
    <variation>SFGIRMILAS</variation>
    <location>
        <begin position="417"/>
        <end position="426"/>
    </location>
</feature>
<feature type="splice variant" id="VSP_032535" description="In isoform 2." evidence="7">
    <location>
        <begin position="427"/>
        <end position="591"/>
    </location>
</feature>
<feature type="sequence variant" id="VAR_039982" description="In dbSNP:rs4664950.">
    <original>Q</original>
    <variation>R</variation>
    <location>
        <position position="75"/>
    </location>
</feature>
<feature type="sequence variant" id="VAR_039983" description="In dbSNP:rs12620556." evidence="3">
    <original>M</original>
    <variation>V</variation>
    <location>
        <position position="157"/>
    </location>
</feature>
<feature type="sequence variant" id="VAR_039984" description="In dbSNP:rs7559772." evidence="2 3 4 5">
    <original>K</original>
    <variation>R</variation>
    <location>
        <position position="329"/>
    </location>
</feature>
<feature type="sequence conflict" description="In Ref. 5; AAI07597." evidence="8" ref="5">
    <original>Y</original>
    <variation>F</variation>
    <location>
        <position position="307"/>
    </location>
</feature>
<proteinExistence type="evidence at protein level"/>
<protein>
    <recommendedName>
        <fullName>Coiled-coil domain-containing protein 148</fullName>
    </recommendedName>
</protein>
<comment type="interaction">
    <interactant intactId="EBI-2349862">
        <id>Q8NFR7</id>
    </interactant>
    <interactant intactId="EBI-711613">
        <id>P21673</id>
        <label>SAT1</label>
    </interactant>
    <organismsDiffer>false</organismsDiffer>
    <experiments>5</experiments>
</comment>
<comment type="interaction">
    <interactant intactId="EBI-2349862">
        <id>Q8NFR7</id>
    </interactant>
    <interactant intactId="EBI-739895">
        <id>Q8N6Y0</id>
        <label>USHBP1</label>
    </interactant>
    <organismsDiffer>false</organismsDiffer>
    <experiments>3</experiments>
</comment>
<comment type="alternative products">
    <event type="alternative splicing"/>
    <isoform>
        <id>Q8NFR7-1</id>
        <name>1</name>
        <sequence type="displayed"/>
    </isoform>
    <isoform>
        <id>Q8NFR7-2</id>
        <name>2</name>
        <sequence type="described" ref="VSP_032532 VSP_032533 VSP_032534 VSP_032535"/>
    </isoform>
    <isoform>
        <id>Q8NFR7-3</id>
        <name>3</name>
        <sequence type="described" ref="VSP_032536"/>
    </isoform>
    <isoform>
        <id>Q8NFR7-4</id>
        <name>4</name>
        <sequence type="described" ref="VSP_045395 VSP_045396 VSP_045397"/>
    </isoform>
</comment>
<comment type="sequence caution" evidence="8">
    <conflict type="frameshift">
        <sequence resource="EMBL-CDS" id="AAI07598"/>
    </conflict>
</comment>
<dbReference type="EMBL" id="AF458588">
    <property type="protein sequence ID" value="AAM49716.1"/>
    <property type="molecule type" value="mRNA"/>
</dbReference>
<dbReference type="EMBL" id="AK058105">
    <property type="protein sequence ID" value="BAB71668.1"/>
    <property type="molecule type" value="mRNA"/>
</dbReference>
<dbReference type="EMBL" id="AK311042">
    <property type="status" value="NOT_ANNOTATED_CDS"/>
    <property type="molecule type" value="mRNA"/>
</dbReference>
<dbReference type="EMBL" id="AC019044">
    <property type="protein sequence ID" value="AAX88983.1"/>
    <property type="molecule type" value="Genomic_DNA"/>
</dbReference>
<dbReference type="EMBL" id="AC069146">
    <property type="protein sequence ID" value="AAX88933.1"/>
    <property type="molecule type" value="Genomic_DNA"/>
</dbReference>
<dbReference type="EMBL" id="AC008070">
    <property type="protein sequence ID" value="AAY14928.1"/>
    <property type="molecule type" value="Genomic_DNA"/>
</dbReference>
<dbReference type="EMBL" id="CH471058">
    <property type="protein sequence ID" value="EAX11435.1"/>
    <property type="molecule type" value="Genomic_DNA"/>
</dbReference>
<dbReference type="EMBL" id="BC015395">
    <property type="protein sequence ID" value="AAH15395.1"/>
    <property type="molecule type" value="mRNA"/>
</dbReference>
<dbReference type="EMBL" id="BC105928">
    <property type="protein sequence ID" value="AAI05929.1"/>
    <property type="molecule type" value="mRNA"/>
</dbReference>
<dbReference type="EMBL" id="BC107596">
    <property type="protein sequence ID" value="AAI07597.1"/>
    <property type="molecule type" value="mRNA"/>
</dbReference>
<dbReference type="EMBL" id="BC107597">
    <property type="protein sequence ID" value="AAI07598.1"/>
    <property type="status" value="ALT_FRAME"/>
    <property type="molecule type" value="mRNA"/>
</dbReference>
<dbReference type="CCDS" id="CCDS33304.1">
    <molecule id="Q8NFR7-1"/>
</dbReference>
<dbReference type="CCDS" id="CCDS77476.1">
    <molecule id="Q8NFR7-3"/>
</dbReference>
<dbReference type="RefSeq" id="NP_001288613.1">
    <property type="nucleotide sequence ID" value="NM_001301684.1"/>
</dbReference>
<dbReference type="RefSeq" id="NP_001288614.1">
    <molecule id="Q8NFR7-3"/>
    <property type="nucleotide sequence ID" value="NM_001301685.2"/>
</dbReference>
<dbReference type="RefSeq" id="NP_620158.3">
    <molecule id="Q8NFR7-1"/>
    <property type="nucleotide sequence ID" value="NM_138803.3"/>
</dbReference>
<dbReference type="SMR" id="Q8NFR7"/>
<dbReference type="BioGRID" id="126264">
    <property type="interactions" value="14"/>
</dbReference>
<dbReference type="FunCoup" id="Q8NFR7">
    <property type="interactions" value="147"/>
</dbReference>
<dbReference type="IntAct" id="Q8NFR7">
    <property type="interactions" value="10"/>
</dbReference>
<dbReference type="STRING" id="9606.ENSP00000283233"/>
<dbReference type="iPTMnet" id="Q8NFR7"/>
<dbReference type="PhosphoSitePlus" id="Q8NFR7"/>
<dbReference type="BioMuta" id="CCDC148"/>
<dbReference type="DMDM" id="317373336"/>
<dbReference type="MassIVE" id="Q8NFR7"/>
<dbReference type="PaxDb" id="9606-ENSP00000283233"/>
<dbReference type="PeptideAtlas" id="Q8NFR7"/>
<dbReference type="ProteomicsDB" id="73339">
    <molecule id="Q8NFR7-1"/>
</dbReference>
<dbReference type="ProteomicsDB" id="73340">
    <molecule id="Q8NFR7-2"/>
</dbReference>
<dbReference type="Antibodypedia" id="33710">
    <property type="antibodies" value="82 antibodies from 17 providers"/>
</dbReference>
<dbReference type="DNASU" id="130940"/>
<dbReference type="Ensembl" id="ENST00000283233.10">
    <molecule id="Q8NFR7-1"/>
    <property type="protein sequence ID" value="ENSP00000283233.5"/>
    <property type="gene ID" value="ENSG00000153237.19"/>
</dbReference>
<dbReference type="Ensembl" id="ENST00000409889.1">
    <molecule id="Q8NFR7-3"/>
    <property type="protein sequence ID" value="ENSP00000386583.1"/>
    <property type="gene ID" value="ENSG00000153237.19"/>
</dbReference>
<dbReference type="GeneID" id="130940"/>
<dbReference type="KEGG" id="hsa:130940"/>
<dbReference type="MANE-Select" id="ENST00000283233.10">
    <property type="protein sequence ID" value="ENSP00000283233.5"/>
    <property type="RefSeq nucleotide sequence ID" value="NM_138803.4"/>
    <property type="RefSeq protein sequence ID" value="NP_620158.3"/>
</dbReference>
<dbReference type="UCSC" id="uc002tzq.4">
    <molecule id="Q8NFR7-1"/>
    <property type="organism name" value="human"/>
</dbReference>
<dbReference type="AGR" id="HGNC:25191"/>
<dbReference type="CTD" id="130940"/>
<dbReference type="DisGeNET" id="130940"/>
<dbReference type="GeneCards" id="CCDC148"/>
<dbReference type="HGNC" id="HGNC:25191">
    <property type="gene designation" value="CCDC148"/>
</dbReference>
<dbReference type="HPA" id="ENSG00000153237">
    <property type="expression patterns" value="Tissue enhanced (testis)"/>
</dbReference>
<dbReference type="neXtProt" id="NX_Q8NFR7"/>
<dbReference type="OpenTargets" id="ENSG00000153237"/>
<dbReference type="PharmGKB" id="PA162381559"/>
<dbReference type="VEuPathDB" id="HostDB:ENSG00000153237"/>
<dbReference type="eggNOG" id="ENOG502QV5F">
    <property type="taxonomic scope" value="Eukaryota"/>
</dbReference>
<dbReference type="GeneTree" id="ENSGT00940000153988"/>
<dbReference type="HOGENOM" id="CLU_032590_0_0_1"/>
<dbReference type="InParanoid" id="Q8NFR7"/>
<dbReference type="OMA" id="KLKKYWA"/>
<dbReference type="OrthoDB" id="448087at2759"/>
<dbReference type="PAN-GO" id="Q8NFR7">
    <property type="GO annotations" value="0 GO annotations based on evolutionary models"/>
</dbReference>
<dbReference type="PhylomeDB" id="Q8NFR7"/>
<dbReference type="TreeFam" id="TF332726"/>
<dbReference type="PathwayCommons" id="Q8NFR7"/>
<dbReference type="SignaLink" id="Q8NFR7"/>
<dbReference type="BioGRID-ORCS" id="130940">
    <property type="hits" value="13 hits in 1146 CRISPR screens"/>
</dbReference>
<dbReference type="GenomeRNAi" id="130940"/>
<dbReference type="Pharos" id="Q8NFR7">
    <property type="development level" value="Tdark"/>
</dbReference>
<dbReference type="PRO" id="PR:Q8NFR7"/>
<dbReference type="Proteomes" id="UP000005640">
    <property type="component" value="Chromosome 2"/>
</dbReference>
<dbReference type="RNAct" id="Q8NFR7">
    <property type="molecule type" value="protein"/>
</dbReference>
<dbReference type="Bgee" id="ENSG00000153237">
    <property type="expression patterns" value="Expressed in bronchial epithelial cell and 112 other cell types or tissues"/>
</dbReference>
<dbReference type="ExpressionAtlas" id="Q8NFR7">
    <property type="expression patterns" value="baseline and differential"/>
</dbReference>
<dbReference type="InterPro" id="IPR039902">
    <property type="entry name" value="CCDC148/CCDC112"/>
</dbReference>
<dbReference type="PANTHER" id="PTHR21549:SF1">
    <property type="entry name" value="COILED-COIL DOMAIN-CONTAINING PROTEIN 148"/>
    <property type="match status" value="1"/>
</dbReference>
<dbReference type="PANTHER" id="PTHR21549">
    <property type="entry name" value="MUTATED IN BLADDER CANCER 1"/>
    <property type="match status" value="1"/>
</dbReference>
<gene>
    <name type="primary">CCDC148</name>
</gene>
<organism>
    <name type="scientific">Homo sapiens</name>
    <name type="common">Human</name>
    <dbReference type="NCBI Taxonomy" id="9606"/>
    <lineage>
        <taxon>Eukaryota</taxon>
        <taxon>Metazoa</taxon>
        <taxon>Chordata</taxon>
        <taxon>Craniata</taxon>
        <taxon>Vertebrata</taxon>
        <taxon>Euteleostomi</taxon>
        <taxon>Mammalia</taxon>
        <taxon>Eutheria</taxon>
        <taxon>Euarchontoglires</taxon>
        <taxon>Primates</taxon>
        <taxon>Haplorrhini</taxon>
        <taxon>Catarrhini</taxon>
        <taxon>Hominidae</taxon>
        <taxon>Homo</taxon>
    </lineage>
</organism>
<reference key="1">
    <citation type="submission" date="2001-12" db="EMBL/GenBank/DDBJ databases">
        <authorList>
            <person name="Guo J.H."/>
            <person name="Yu L."/>
        </authorList>
    </citation>
    <scope>NUCLEOTIDE SEQUENCE [LARGE SCALE MRNA] (ISOFORM 1)</scope>
    <scope>VARIANT ARG-329</scope>
    <source>
        <tissue>Brain</tissue>
    </source>
</reference>
<reference key="2">
    <citation type="journal article" date="2004" name="Nat. Genet.">
        <title>Complete sequencing and characterization of 21,243 full-length human cDNAs.</title>
        <authorList>
            <person name="Ota T."/>
            <person name="Suzuki Y."/>
            <person name="Nishikawa T."/>
            <person name="Otsuki T."/>
            <person name="Sugiyama T."/>
            <person name="Irie R."/>
            <person name="Wakamatsu A."/>
            <person name="Hayashi K."/>
            <person name="Sato H."/>
            <person name="Nagai K."/>
            <person name="Kimura K."/>
            <person name="Makita H."/>
            <person name="Sekine M."/>
            <person name="Obayashi M."/>
            <person name="Nishi T."/>
            <person name="Shibahara T."/>
            <person name="Tanaka T."/>
            <person name="Ishii S."/>
            <person name="Yamamoto J."/>
            <person name="Saito K."/>
            <person name="Kawai Y."/>
            <person name="Isono Y."/>
            <person name="Nakamura Y."/>
            <person name="Nagahari K."/>
            <person name="Murakami K."/>
            <person name="Yasuda T."/>
            <person name="Iwayanagi T."/>
            <person name="Wagatsuma M."/>
            <person name="Shiratori A."/>
            <person name="Sudo H."/>
            <person name="Hosoiri T."/>
            <person name="Kaku Y."/>
            <person name="Kodaira H."/>
            <person name="Kondo H."/>
            <person name="Sugawara M."/>
            <person name="Takahashi M."/>
            <person name="Kanda K."/>
            <person name="Yokoi T."/>
            <person name="Furuya T."/>
            <person name="Kikkawa E."/>
            <person name="Omura Y."/>
            <person name="Abe K."/>
            <person name="Kamihara K."/>
            <person name="Katsuta N."/>
            <person name="Sato K."/>
            <person name="Tanikawa M."/>
            <person name="Yamazaki M."/>
            <person name="Ninomiya K."/>
            <person name="Ishibashi T."/>
            <person name="Yamashita H."/>
            <person name="Murakawa K."/>
            <person name="Fujimori K."/>
            <person name="Tanai H."/>
            <person name="Kimata M."/>
            <person name="Watanabe M."/>
            <person name="Hiraoka S."/>
            <person name="Chiba Y."/>
            <person name="Ishida S."/>
            <person name="Ono Y."/>
            <person name="Takiguchi S."/>
            <person name="Watanabe S."/>
            <person name="Yosida M."/>
            <person name="Hotuta T."/>
            <person name="Kusano J."/>
            <person name="Kanehori K."/>
            <person name="Takahashi-Fujii A."/>
            <person name="Hara H."/>
            <person name="Tanase T.-O."/>
            <person name="Nomura Y."/>
            <person name="Togiya S."/>
            <person name="Komai F."/>
            <person name="Hara R."/>
            <person name="Takeuchi K."/>
            <person name="Arita M."/>
            <person name="Imose N."/>
            <person name="Musashino K."/>
            <person name="Yuuki H."/>
            <person name="Oshima A."/>
            <person name="Sasaki N."/>
            <person name="Aotsuka S."/>
            <person name="Yoshikawa Y."/>
            <person name="Matsunawa H."/>
            <person name="Ichihara T."/>
            <person name="Shiohata N."/>
            <person name="Sano S."/>
            <person name="Moriya S."/>
            <person name="Momiyama H."/>
            <person name="Satoh N."/>
            <person name="Takami S."/>
            <person name="Terashima Y."/>
            <person name="Suzuki O."/>
            <person name="Nakagawa S."/>
            <person name="Senoh A."/>
            <person name="Mizoguchi H."/>
            <person name="Goto Y."/>
            <person name="Shimizu F."/>
            <person name="Wakebe H."/>
            <person name="Hishigaki H."/>
            <person name="Watanabe T."/>
            <person name="Sugiyama A."/>
            <person name="Takemoto M."/>
            <person name="Kawakami B."/>
            <person name="Yamazaki M."/>
            <person name="Watanabe K."/>
            <person name="Kumagai A."/>
            <person name="Itakura S."/>
            <person name="Fukuzumi Y."/>
            <person name="Fujimori Y."/>
            <person name="Komiyama M."/>
            <person name="Tashiro H."/>
            <person name="Tanigami A."/>
            <person name="Fujiwara T."/>
            <person name="Ono T."/>
            <person name="Yamada K."/>
            <person name="Fujii Y."/>
            <person name="Ozaki K."/>
            <person name="Hirao M."/>
            <person name="Ohmori Y."/>
            <person name="Kawabata A."/>
            <person name="Hikiji T."/>
            <person name="Kobatake N."/>
            <person name="Inagaki H."/>
            <person name="Ikema Y."/>
            <person name="Okamoto S."/>
            <person name="Okitani R."/>
            <person name="Kawakami T."/>
            <person name="Noguchi S."/>
            <person name="Itoh T."/>
            <person name="Shigeta K."/>
            <person name="Senba T."/>
            <person name="Matsumura K."/>
            <person name="Nakajima Y."/>
            <person name="Mizuno T."/>
            <person name="Morinaga M."/>
            <person name="Sasaki M."/>
            <person name="Togashi T."/>
            <person name="Oyama M."/>
            <person name="Hata H."/>
            <person name="Watanabe M."/>
            <person name="Komatsu T."/>
            <person name="Mizushima-Sugano J."/>
            <person name="Satoh T."/>
            <person name="Shirai Y."/>
            <person name="Takahashi Y."/>
            <person name="Nakagawa K."/>
            <person name="Okumura K."/>
            <person name="Nagase T."/>
            <person name="Nomura N."/>
            <person name="Kikuchi H."/>
            <person name="Masuho Y."/>
            <person name="Yamashita R."/>
            <person name="Nakai K."/>
            <person name="Yada T."/>
            <person name="Nakamura Y."/>
            <person name="Ohara O."/>
            <person name="Isogai T."/>
            <person name="Sugano S."/>
        </authorList>
    </citation>
    <scope>NUCLEOTIDE SEQUENCE [LARGE SCALE MRNA] (ISOFORMS 3 AND 4)</scope>
    <scope>VARIANT ARG-329</scope>
    <source>
        <tissue>Testis</tissue>
        <tissue>Uterus</tissue>
    </source>
</reference>
<reference key="3">
    <citation type="journal article" date="2005" name="Nature">
        <title>Generation and annotation of the DNA sequences of human chromosomes 2 and 4.</title>
        <authorList>
            <person name="Hillier L.W."/>
            <person name="Graves T.A."/>
            <person name="Fulton R.S."/>
            <person name="Fulton L.A."/>
            <person name="Pepin K.H."/>
            <person name="Minx P."/>
            <person name="Wagner-McPherson C."/>
            <person name="Layman D."/>
            <person name="Wylie K."/>
            <person name="Sekhon M."/>
            <person name="Becker M.C."/>
            <person name="Fewell G.A."/>
            <person name="Delehaunty K.D."/>
            <person name="Miner T.L."/>
            <person name="Nash W.E."/>
            <person name="Kremitzki C."/>
            <person name="Oddy L."/>
            <person name="Du H."/>
            <person name="Sun H."/>
            <person name="Bradshaw-Cordum H."/>
            <person name="Ali J."/>
            <person name="Carter J."/>
            <person name="Cordes M."/>
            <person name="Harris A."/>
            <person name="Isak A."/>
            <person name="van Brunt A."/>
            <person name="Nguyen C."/>
            <person name="Du F."/>
            <person name="Courtney L."/>
            <person name="Kalicki J."/>
            <person name="Ozersky P."/>
            <person name="Abbott S."/>
            <person name="Armstrong J."/>
            <person name="Belter E.A."/>
            <person name="Caruso L."/>
            <person name="Cedroni M."/>
            <person name="Cotton M."/>
            <person name="Davidson T."/>
            <person name="Desai A."/>
            <person name="Elliott G."/>
            <person name="Erb T."/>
            <person name="Fronick C."/>
            <person name="Gaige T."/>
            <person name="Haakenson W."/>
            <person name="Haglund K."/>
            <person name="Holmes A."/>
            <person name="Harkins R."/>
            <person name="Kim K."/>
            <person name="Kruchowski S.S."/>
            <person name="Strong C.M."/>
            <person name="Grewal N."/>
            <person name="Goyea E."/>
            <person name="Hou S."/>
            <person name="Levy A."/>
            <person name="Martinka S."/>
            <person name="Mead K."/>
            <person name="McLellan M.D."/>
            <person name="Meyer R."/>
            <person name="Randall-Maher J."/>
            <person name="Tomlinson C."/>
            <person name="Dauphin-Kohlberg S."/>
            <person name="Kozlowicz-Reilly A."/>
            <person name="Shah N."/>
            <person name="Swearengen-Shahid S."/>
            <person name="Snider J."/>
            <person name="Strong J.T."/>
            <person name="Thompson J."/>
            <person name="Yoakum M."/>
            <person name="Leonard S."/>
            <person name="Pearman C."/>
            <person name="Trani L."/>
            <person name="Radionenko M."/>
            <person name="Waligorski J.E."/>
            <person name="Wang C."/>
            <person name="Rock S.M."/>
            <person name="Tin-Wollam A.-M."/>
            <person name="Maupin R."/>
            <person name="Latreille P."/>
            <person name="Wendl M.C."/>
            <person name="Yang S.-P."/>
            <person name="Pohl C."/>
            <person name="Wallis J.W."/>
            <person name="Spieth J."/>
            <person name="Bieri T.A."/>
            <person name="Berkowicz N."/>
            <person name="Nelson J.O."/>
            <person name="Osborne J."/>
            <person name="Ding L."/>
            <person name="Meyer R."/>
            <person name="Sabo A."/>
            <person name="Shotland Y."/>
            <person name="Sinha P."/>
            <person name="Wohldmann P.E."/>
            <person name="Cook L.L."/>
            <person name="Hickenbotham M.T."/>
            <person name="Eldred J."/>
            <person name="Williams D."/>
            <person name="Jones T.A."/>
            <person name="She X."/>
            <person name="Ciccarelli F.D."/>
            <person name="Izaurralde E."/>
            <person name="Taylor J."/>
            <person name="Schmutz J."/>
            <person name="Myers R.M."/>
            <person name="Cox D.R."/>
            <person name="Huang X."/>
            <person name="McPherson J.D."/>
            <person name="Mardis E.R."/>
            <person name="Clifton S.W."/>
            <person name="Warren W.C."/>
            <person name="Chinwalla A.T."/>
            <person name="Eddy S.R."/>
            <person name="Marra M.A."/>
            <person name="Ovcharenko I."/>
            <person name="Furey T.S."/>
            <person name="Miller W."/>
            <person name="Eichler E.E."/>
            <person name="Bork P."/>
            <person name="Suyama M."/>
            <person name="Torrents D."/>
            <person name="Waterston R.H."/>
            <person name="Wilson R.K."/>
        </authorList>
    </citation>
    <scope>NUCLEOTIDE SEQUENCE [LARGE SCALE GENOMIC DNA]</scope>
</reference>
<reference key="4">
    <citation type="submission" date="2005-09" db="EMBL/GenBank/DDBJ databases">
        <authorList>
            <person name="Mural R.J."/>
            <person name="Istrail S."/>
            <person name="Sutton G.G."/>
            <person name="Florea L."/>
            <person name="Halpern A.L."/>
            <person name="Mobarry C.M."/>
            <person name="Lippert R."/>
            <person name="Walenz B."/>
            <person name="Shatkay H."/>
            <person name="Dew I."/>
            <person name="Miller J.R."/>
            <person name="Flanigan M.J."/>
            <person name="Edwards N.J."/>
            <person name="Bolanos R."/>
            <person name="Fasulo D."/>
            <person name="Halldorsson B.V."/>
            <person name="Hannenhalli S."/>
            <person name="Turner R."/>
            <person name="Yooseph S."/>
            <person name="Lu F."/>
            <person name="Nusskern D.R."/>
            <person name="Shue B.C."/>
            <person name="Zheng X.H."/>
            <person name="Zhong F."/>
            <person name="Delcher A.L."/>
            <person name="Huson D.H."/>
            <person name="Kravitz S.A."/>
            <person name="Mouchard L."/>
            <person name="Reinert K."/>
            <person name="Remington K.A."/>
            <person name="Clark A.G."/>
            <person name="Waterman M.S."/>
            <person name="Eichler E.E."/>
            <person name="Adams M.D."/>
            <person name="Hunkapiller M.W."/>
            <person name="Myers E.W."/>
            <person name="Venter J.C."/>
        </authorList>
    </citation>
    <scope>NUCLEOTIDE SEQUENCE [LARGE SCALE GENOMIC DNA]</scope>
    <scope>VARIANT ARG-329</scope>
</reference>
<reference key="5">
    <citation type="journal article" date="2004" name="Genome Res.">
        <title>The status, quality, and expansion of the NIH full-length cDNA project: the Mammalian Gene Collection (MGC).</title>
        <authorList>
            <consortium name="The MGC Project Team"/>
        </authorList>
    </citation>
    <scope>NUCLEOTIDE SEQUENCE [LARGE SCALE MRNA] (ISOFORMS 2 AND 3)</scope>
    <scope>VARIANTS VAL-157 AND ARG-329</scope>
    <source>
        <tissue>Prostate</tissue>
    </source>
</reference>
<evidence type="ECO:0000255" key="1"/>
<evidence type="ECO:0000269" key="2">
    <source>
    </source>
</evidence>
<evidence type="ECO:0000269" key="3">
    <source>
    </source>
</evidence>
<evidence type="ECO:0000269" key="4">
    <source ref="1"/>
</evidence>
<evidence type="ECO:0000269" key="5">
    <source ref="4"/>
</evidence>
<evidence type="ECO:0000303" key="6">
    <source>
    </source>
</evidence>
<evidence type="ECO:0000303" key="7">
    <source>
    </source>
</evidence>
<evidence type="ECO:0000305" key="8"/>
<keyword id="KW-0025">Alternative splicing</keyword>
<keyword id="KW-0175">Coiled coil</keyword>
<keyword id="KW-1267">Proteomics identification</keyword>
<keyword id="KW-1185">Reference proteome</keyword>